<comment type="function">
    <text evidence="5 9 12 13">Lipid transport protein (LTP) involved in non-vesicular transfer of lipids between membranes. Functions in phosphoinositide-coupled directional transport of various lipids by carrying the lipid molecule in a hydrophobic pocket and transferring it between membranes through the cytosol. Involved in maintenance of intracellular sterol distribution and homeostasis (PubMed:11238399, PubMed:15173322, PubMed:8017104). Involved in non-vesicular transport of ergosterol and PI(4)P at the NVJ. Binds sterol and PI4P in a mutually exclusive manner (PubMed:28319008). May be involved in formation of PMN vesicles by altering the membrane lipid composition (PubMed:15173322).</text>
</comment>
<comment type="subunit">
    <text evidence="7 10 12 17">Interacts with NVJ1 (PubMed:15367582, PubMed:28319008). Interacts with the AAA ATPase AFG2; regulates OSH1 membrane association. AFG2 is required for membrane dissociation of OSH1 (Probable). Interacts with SCS2 (PubMed:12727870).</text>
</comment>
<comment type="interaction">
    <interactant intactId="EBI-12611">
        <id>P35845</id>
    </interactant>
    <interactant intactId="EBI-16735">
        <id>P40075</id>
        <label>SCS2</label>
    </interactant>
    <organismsDiffer>false</organismsDiffer>
    <experiments>3</experiments>
</comment>
<comment type="subcellular location">
    <subcellularLocation>
        <location evidence="6">Golgi apparatus membrane</location>
    </subcellularLocation>
    <subcellularLocation>
        <location evidence="6 7 10 11">Nucleus outer membrane</location>
    </subcellularLocation>
    <subcellularLocation>
        <location evidence="7">Endoplasmic reticulum membrane</location>
    </subcellularLocation>
    <subcellularLocation>
        <location evidence="6 10 11">Vacuole membrane</location>
    </subcellularLocation>
    <text evidence="6 10 11">Soluble protein that accumulates on the surface of late Golgi membranes and at nucleus-vacuole (NV) junctions, interorganelle interfaces between the nuclear envelope and the vacuole membrane formed during piecemeal microautophagy of the nucleus (PMN). Targeted exclusively to NV junctions in stationary phase.</text>
</comment>
<comment type="domain">
    <text evidence="7 12">The ankyrin repeats are required for targeting the protein to the NV junction by interacting with NVJ1.</text>
</comment>
<comment type="domain">
    <text evidence="8">The PH domain strongly binds to phosphoinositides and is required for targeting the protein to the late Golgi membranes.</text>
</comment>
<comment type="domain">
    <text evidence="7">The FFAT (two phenylalanines in an acidic tract) motif is required for interaction with SCS2 and is required for targeting the protein to the ER.</text>
</comment>
<comment type="domain">
    <text evidence="18">The OSBP-related domain (ORD) mediates binding of sterols and phospholipids. It displays an incomplete beta-barrel containing a central hydrophobic tunnel that can accommodate a single lipid molecule with a flexible lid covering the tunnel entrance. The ORD can bind two membranes simultaneously. It has at least two membrane-binding surfaces; one near the mouth of the lipid-binding pocket and a distal site that can bind a second membrane. These structural features correlate with the phosphatidylinositol 4-phosphate (PI(4)P)-coupled lipid transport optimized in closely apposed membranes, such as organelle contact sites. The lipid transfer cycle starts from the association of the LTP with a donor membrane, which accompanies conformational changes that uncover the ligand-binding pocket. The tunnel opening is generally mediated by displacement of the lid covering the binding pocket allowing uptake or release of a lipid molecule. The LTPs extract the lipid from the membrane by providing a hydrophobic environment as well as specific interaction. Dissociation from the donor membrane shifts the conformation to a closed form. Then, the LTPs loaded with a cargo lipid diffuse through the aqueous phase. Lid opening may be induced by the interaction of a hydrophobic side of the lid with the target membranes.</text>
</comment>
<comment type="similarity">
    <text evidence="16">Belongs to the OSBP family.</text>
</comment>
<reference key="1">
    <citation type="journal article" date="1994" name="Biochim. Biophys. Acta">
        <title>SWH1 from yeast encodes a candidate nuclear factor containing ankyrin repeats and showing homology to mammalian oxysterol-binding protein.</title>
        <authorList>
            <person name="Schmalix W.A."/>
            <person name="Bandlow W."/>
        </authorList>
    </citation>
    <scope>NUCLEOTIDE SEQUENCE [GENOMIC DNA]</scope>
    <source>
        <strain>DL-1</strain>
    </source>
</reference>
<reference key="2">
    <citation type="journal article" date="2003" name="EMBO J.">
        <title>A conserved ER targeting motif in three families of lipid binding proteins and in Opi1p binds VAP.</title>
        <authorList>
            <person name="Loewen C.J.R."/>
            <person name="Roy A."/>
            <person name="Levine T.P."/>
        </authorList>
    </citation>
    <scope>NUCLEOTIDE SEQUENCE [GENOMIC DNA]</scope>
    <scope>DOMAIN FFAT MOTIF</scope>
    <scope>MUTAGENESIS OF ASP-719</scope>
    <scope>SUBCELLULAR LOCATION</scope>
    <source>
        <strain>ATCC 96099 / S288c / SEY6210</strain>
    </source>
</reference>
<reference key="3">
    <citation type="submission" date="1994-02" db="EMBL/GenBank/DDBJ databases">
        <title>Sequencing of chromosome I of Saccharomyces cerevisiae: analysis of the 52 Kbp CDC15-FLO1-PHO11-YAR074 region.</title>
        <authorList>
            <person name="Bussey H."/>
            <person name="Keng T."/>
            <person name="Storms R.K."/>
            <person name="Vo D."/>
            <person name="Zhong W."/>
            <person name="Fortin N."/>
            <person name="Barton A.B."/>
            <person name="Kaback D.B."/>
            <person name="Clark M.W."/>
        </authorList>
    </citation>
    <scope>NUCLEOTIDE SEQUENCE [GENOMIC DNA]</scope>
    <source>
        <strain>ATCC 204511 / S288c / AB972</strain>
    </source>
</reference>
<reference key="4">
    <citation type="journal article" date="1995" name="Proc. Natl. Acad. Sci. U.S.A.">
        <title>The nucleotide sequence of chromosome I from Saccharomyces cerevisiae.</title>
        <authorList>
            <person name="Bussey H."/>
            <person name="Kaback D.B."/>
            <person name="Zhong W.-W."/>
            <person name="Vo D.H."/>
            <person name="Clark M.W."/>
            <person name="Fortin N."/>
            <person name="Hall J."/>
            <person name="Ouellette B.F.F."/>
            <person name="Keng T."/>
            <person name="Barton A.B."/>
            <person name="Su Y."/>
            <person name="Davies C.J."/>
            <person name="Storms R.K."/>
        </authorList>
    </citation>
    <scope>NUCLEOTIDE SEQUENCE [LARGE SCALE GENOMIC DNA]</scope>
    <source>
        <strain>ATCC 204508 / S288c</strain>
    </source>
</reference>
<reference key="5">
    <citation type="submission" date="2003-10" db="EMBL/GenBank/DDBJ databases">
        <authorList>
            <person name="Sethuraman A."/>
            <person name="Cherry J.M."/>
        </authorList>
    </citation>
    <scope>SEQUENCE REVISION TO C-TERMINUS</scope>
</reference>
<reference key="6">
    <citation type="journal article" date="2014" name="G3 (Bethesda)">
        <title>The reference genome sequence of Saccharomyces cerevisiae: Then and now.</title>
        <authorList>
            <person name="Engel S.R."/>
            <person name="Dietrich F.S."/>
            <person name="Fisk D.G."/>
            <person name="Binkley G."/>
            <person name="Balakrishnan R."/>
            <person name="Costanzo M.C."/>
            <person name="Dwight S.S."/>
            <person name="Hitz B.C."/>
            <person name="Karra K."/>
            <person name="Nash R.S."/>
            <person name="Weng S."/>
            <person name="Wong E.D."/>
            <person name="Lloyd P."/>
            <person name="Skrzypek M.S."/>
            <person name="Miyasato S.R."/>
            <person name="Simison M."/>
            <person name="Cherry J.M."/>
        </authorList>
    </citation>
    <scope>GENOME REANNOTATION</scope>
    <source>
        <strain>ATCC 204508 / S288c</strain>
    </source>
</reference>
<reference key="7">
    <citation type="journal article" date="2003" name="Genome Biol.">
        <title>Reinvestigation of the Saccharomyces cerevisiae genome annotation by comparison to the genome of a related fungus: Ashbya gossypii.</title>
        <authorList>
            <person name="Brachat S."/>
            <person name="Dietrich F.S."/>
            <person name="Voegeli S."/>
            <person name="Zhang Z."/>
            <person name="Stuart L."/>
            <person name="Lerch A."/>
            <person name="Gates K."/>
            <person name="Gaffney T.D."/>
            <person name="Philippsen P."/>
        </authorList>
    </citation>
    <scope>NUCLEOTIDE SEQUENCE [GENOMIC DNA] OF 199-264</scope>
    <source>
        <strain>ATCC 204511 / S288c / AB972</strain>
    </source>
</reference>
<reference key="8">
    <citation type="journal article" date="1994" name="Yeast">
        <title>A new family of yeast genes implicated in ergosterol synthesis is related to the human oxysterol binding protein.</title>
        <authorList>
            <person name="Jiang B."/>
            <person name="Brown J.L."/>
            <person name="Sheraton J."/>
            <person name="Fortin N."/>
            <person name="Bussey H."/>
        </authorList>
    </citation>
    <scope>FUNCTION</scope>
</reference>
<reference key="9">
    <citation type="journal article" date="2001" name="Genetics">
        <title>Overlapping functions of the yeast oxysterol-binding protein homologues.</title>
        <authorList>
            <person name="Beh C.T."/>
            <person name="Cool L."/>
            <person name="Phillips J."/>
            <person name="Rine J."/>
        </authorList>
    </citation>
    <scope>FUNCTION</scope>
</reference>
<reference key="10">
    <citation type="journal article" date="2001" name="Mol. Biol. Cell">
        <title>Dual targeting of Osh1p, a yeast homologue of oxysterol-binding protein, to both the Golgi and the nucleus-vacuole junction.</title>
        <authorList>
            <person name="Levine T.P."/>
            <person name="Munro S."/>
        </authorList>
    </citation>
    <scope>SUBCELLULAR LOCATION</scope>
</reference>
<reference key="11">
    <citation type="journal article" date="2004" name="J. Cell Sci.">
        <title>A role for yeast oxysterol-binding protein homologs in endocytosis and in the maintenance of intracellular sterol-lipid distribution.</title>
        <authorList>
            <person name="Beh C.T."/>
            <person name="Rine J."/>
        </authorList>
    </citation>
    <scope>FUNCTION</scope>
</reference>
<reference key="12">
    <citation type="journal article" date="2004" name="J. Cell Sci.">
        <title>Nvj1p is the outer-nuclear-membrane receptor for oxysterol-binding protein homolog Osh1p in Saccharomyces cerevisiae.</title>
        <authorList>
            <person name="Kvam E."/>
            <person name="Goldfarb D.S."/>
        </authorList>
    </citation>
    <scope>INTERACTION WITH NVJ1</scope>
    <scope>SUBCELLULAR LOCATION</scope>
</reference>
<reference key="13">
    <citation type="journal article" date="2004" name="Mol. Cell">
        <title>Genome-wide analysis of membrane targeting by S.cerevisiae pleckstrin homology domains.</title>
        <authorList>
            <person name="Yu J.W."/>
            <person name="Mendrola J.M."/>
            <person name="Audhya A."/>
            <person name="Singh S."/>
            <person name="Keleti D."/>
            <person name="DeWald D.B."/>
            <person name="Murray D."/>
            <person name="Emr S.D."/>
            <person name="Lemmon M.A."/>
        </authorList>
    </citation>
    <scope>SUBCELLULAR LOCATION</scope>
</reference>
<reference key="14">
    <citation type="journal article" date="2005" name="EMBO J.">
        <title>AAA ATPases regulate membrane association of yeast oxysterol binding proteins and sterol metabolism.</title>
        <authorList>
            <person name="Wang P."/>
            <person name="Zhang Y."/>
            <person name="Li H."/>
            <person name="Chieu H.K."/>
            <person name="Munn A.L."/>
            <person name="Yang H."/>
        </authorList>
    </citation>
    <scope>INTERACTION WITH AFG2</scope>
</reference>
<reference key="15">
    <citation type="journal article" date="2007" name="J. Proteome Res.">
        <title>Large-scale phosphorylation analysis of alpha-factor-arrested Saccharomyces cerevisiae.</title>
        <authorList>
            <person name="Li X."/>
            <person name="Gerber S.A."/>
            <person name="Rudner A.D."/>
            <person name="Beausoleil S.A."/>
            <person name="Haas W."/>
            <person name="Villen J."/>
            <person name="Elias J.E."/>
            <person name="Gygi S.P."/>
        </authorList>
    </citation>
    <scope>PHOSPHORYLATION [LARGE SCALE ANALYSIS] AT SER-394; SER-490; SER-678; SER-708 AND SER-712</scope>
    <scope>IDENTIFICATION BY MASS SPECTROMETRY [LARGE SCALE ANALYSIS]</scope>
    <source>
        <strain>ADR376</strain>
    </source>
</reference>
<reference key="16">
    <citation type="journal article" date="2008" name="Mol. Cell. Proteomics">
        <title>A multidimensional chromatography technology for in-depth phosphoproteome analysis.</title>
        <authorList>
            <person name="Albuquerque C.P."/>
            <person name="Smolka M.B."/>
            <person name="Payne S.H."/>
            <person name="Bafna V."/>
            <person name="Eng J."/>
            <person name="Zhou H."/>
        </authorList>
    </citation>
    <scope>PHOSPHORYLATION [LARGE SCALE ANALYSIS] AT SER-490; SER-500; SER-678; THR-694; SER-708 AND SER-712</scope>
    <scope>IDENTIFICATION BY MASS SPECTROMETRY [LARGE SCALE ANALYSIS]</scope>
</reference>
<reference key="17">
    <citation type="journal article" date="2009" name="J. Cell Biol.">
        <title>Lipid-regulated sterol transfer between closely apposed membranes by oxysterol-binding protein homologues.</title>
        <authorList>
            <person name="Schulz T.A."/>
            <person name="Choi M.G."/>
            <person name="Raychaudhuri S."/>
            <person name="Mears J.A."/>
            <person name="Ghirlando R."/>
            <person name="Hinshaw J.E."/>
            <person name="Prinz W.A."/>
        </authorList>
    </citation>
    <scope>DOMAIN</scope>
</reference>
<reference key="18">
    <citation type="journal article" date="2009" name="Science">
        <title>Global analysis of Cdk1 substrate phosphorylation sites provides insights into evolution.</title>
        <authorList>
            <person name="Holt L.J."/>
            <person name="Tuch B.B."/>
            <person name="Villen J."/>
            <person name="Johnson A.D."/>
            <person name="Gygi S.P."/>
            <person name="Morgan D.O."/>
        </authorList>
    </citation>
    <scope>PHOSPHORYLATION [LARGE SCALE ANALYSIS] AT SER-490; SER-678; SER-683; SER-691; THR-692; THR-694; SER-708 AND SER-712</scope>
    <scope>IDENTIFICATION BY MASS SPECTROMETRY [LARGE SCALE ANALYSIS]</scope>
</reference>
<reference key="19">
    <citation type="journal article" date="2015" name="Cell. Mol. Life Sci.">
        <title>Ligand-dependent localization and function of ORP-VAP complexes at membrane contact sites.</title>
        <authorList>
            <person name="Weber-Boyvat M."/>
            <person name="Kentala H."/>
            <person name="Peraenen J."/>
            <person name="Olkkonen V.M."/>
        </authorList>
    </citation>
    <scope>SUBCELLULAR LOCATION</scope>
</reference>
<reference evidence="19 20" key="20">
    <citation type="journal article" date="2017" name="Structure">
        <title>Structure of yeast OSBP-related protein Osh1 reveals key determinants for lipid transport and protein targeting at the nucleus-vacuole junction.</title>
        <authorList>
            <person name="Manik M.K."/>
            <person name="Yang H."/>
            <person name="Tong J."/>
            <person name="Im Y.J."/>
        </authorList>
    </citation>
    <scope>X-RAY CRYSTALLOGRAPHY (1.50 ANGSTROMS) OF 12-274</scope>
</reference>
<dbReference type="EMBL" id="X74552">
    <property type="protein sequence ID" value="CAA52646.1"/>
    <property type="molecule type" value="Genomic_DNA"/>
</dbReference>
<dbReference type="EMBL" id="AY241177">
    <property type="protein sequence ID" value="AAP31019.1"/>
    <property type="molecule type" value="Genomic_DNA"/>
</dbReference>
<dbReference type="EMBL" id="L28920">
    <property type="protein sequence ID" value="AAC09496.2"/>
    <property type="molecule type" value="Genomic_DNA"/>
</dbReference>
<dbReference type="EMBL" id="AY260892">
    <property type="protein sequence ID" value="AAP21760.1"/>
    <property type="molecule type" value="Genomic_DNA"/>
</dbReference>
<dbReference type="EMBL" id="BK006935">
    <property type="protein sequence ID" value="DAA07006.1"/>
    <property type="molecule type" value="Genomic_DNA"/>
</dbReference>
<dbReference type="PIR" id="S47536">
    <property type="entry name" value="S47536"/>
</dbReference>
<dbReference type="RefSeq" id="NP_009421.3">
    <property type="nucleotide sequence ID" value="NM_001178227.1"/>
</dbReference>
<dbReference type="PDB" id="5H28">
    <property type="method" value="X-ray"/>
    <property type="resolution" value="1.50 A"/>
    <property type="chains" value="A=12-274"/>
</dbReference>
<dbReference type="PDB" id="5H2C">
    <property type="method" value="X-ray"/>
    <property type="resolution" value="3.51 A"/>
    <property type="chains" value="A=7-274"/>
</dbReference>
<dbReference type="PDBsum" id="5H28"/>
<dbReference type="PDBsum" id="5H2C"/>
<dbReference type="SMR" id="P35845"/>
<dbReference type="BioGRID" id="31812">
    <property type="interactions" value="137"/>
</dbReference>
<dbReference type="DIP" id="DIP-6839N"/>
<dbReference type="ELM" id="P35845"/>
<dbReference type="FunCoup" id="P35845">
    <property type="interactions" value="467"/>
</dbReference>
<dbReference type="IntAct" id="P35845">
    <property type="interactions" value="26"/>
</dbReference>
<dbReference type="MINT" id="P35845"/>
<dbReference type="STRING" id="4932.YAR042W"/>
<dbReference type="iPTMnet" id="P35845"/>
<dbReference type="PaxDb" id="4932-YAR042W"/>
<dbReference type="PeptideAtlas" id="P35845"/>
<dbReference type="EnsemblFungi" id="YAR042W_mRNA">
    <property type="protein sequence ID" value="YAR042W"/>
    <property type="gene ID" value="YAR042W"/>
</dbReference>
<dbReference type="GeneID" id="851286"/>
<dbReference type="KEGG" id="sce:YAR042W"/>
<dbReference type="AGR" id="SGD:S000000081"/>
<dbReference type="SGD" id="S000000081">
    <property type="gene designation" value="SWH1"/>
</dbReference>
<dbReference type="VEuPathDB" id="FungiDB:YAR042W"/>
<dbReference type="eggNOG" id="KOG0504">
    <property type="taxonomic scope" value="Eukaryota"/>
</dbReference>
<dbReference type="eggNOG" id="KOG1737">
    <property type="taxonomic scope" value="Eukaryota"/>
</dbReference>
<dbReference type="GeneTree" id="ENSGT00940000173329"/>
<dbReference type="HOGENOM" id="CLU_001040_1_1_1"/>
<dbReference type="InParanoid" id="P35845"/>
<dbReference type="OMA" id="LPEMKGW"/>
<dbReference type="OrthoDB" id="1854502at2759"/>
<dbReference type="BioCyc" id="YEAST:G3O-28883-MONOMER"/>
<dbReference type="Reactome" id="R-SCE-192105">
    <property type="pathway name" value="Synthesis of bile acids and bile salts"/>
</dbReference>
<dbReference type="BioGRID-ORCS" id="851286">
    <property type="hits" value="7 hits in 10 CRISPR screens"/>
</dbReference>
<dbReference type="PRO" id="PR:P35845"/>
<dbReference type="Proteomes" id="UP000002311">
    <property type="component" value="Chromosome I"/>
</dbReference>
<dbReference type="RNAct" id="P35845">
    <property type="molecule type" value="protein"/>
</dbReference>
<dbReference type="GO" id="GO:0005829">
    <property type="term" value="C:cytosol"/>
    <property type="evidence" value="ECO:0000318"/>
    <property type="project" value="GO_Central"/>
</dbReference>
<dbReference type="GO" id="GO:0005769">
    <property type="term" value="C:early endosome"/>
    <property type="evidence" value="ECO:0000314"/>
    <property type="project" value="SGD"/>
</dbReference>
<dbReference type="GO" id="GO:0005783">
    <property type="term" value="C:endoplasmic reticulum"/>
    <property type="evidence" value="ECO:0000314"/>
    <property type="project" value="SGD"/>
</dbReference>
<dbReference type="GO" id="GO:0005789">
    <property type="term" value="C:endoplasmic reticulum membrane"/>
    <property type="evidence" value="ECO:0007669"/>
    <property type="project" value="UniProtKB-SubCell"/>
</dbReference>
<dbReference type="GO" id="GO:0000139">
    <property type="term" value="C:Golgi membrane"/>
    <property type="evidence" value="ECO:0007669"/>
    <property type="project" value="UniProtKB-SubCell"/>
</dbReference>
<dbReference type="GO" id="GO:0000138">
    <property type="term" value="C:Golgi trans cisterna"/>
    <property type="evidence" value="ECO:0000314"/>
    <property type="project" value="SGD"/>
</dbReference>
<dbReference type="GO" id="GO:0005635">
    <property type="term" value="C:nuclear envelope"/>
    <property type="evidence" value="ECO:0000314"/>
    <property type="project" value="SGD"/>
</dbReference>
<dbReference type="GO" id="GO:0005640">
    <property type="term" value="C:nuclear outer membrane"/>
    <property type="evidence" value="ECO:0007669"/>
    <property type="project" value="UniProtKB-SubCell"/>
</dbReference>
<dbReference type="GO" id="GO:0071561">
    <property type="term" value="C:nucleus-vacuole junction"/>
    <property type="evidence" value="ECO:0000314"/>
    <property type="project" value="SGD"/>
</dbReference>
<dbReference type="GO" id="GO:0097038">
    <property type="term" value="C:perinuclear endoplasmic reticulum"/>
    <property type="evidence" value="ECO:0000318"/>
    <property type="project" value="GO_Central"/>
</dbReference>
<dbReference type="GO" id="GO:0005886">
    <property type="term" value="C:plasma membrane"/>
    <property type="evidence" value="ECO:0000318"/>
    <property type="project" value="GO_Central"/>
</dbReference>
<dbReference type="GO" id="GO:0005774">
    <property type="term" value="C:vacuolar membrane"/>
    <property type="evidence" value="ECO:0007669"/>
    <property type="project" value="UniProtKB-SubCell"/>
</dbReference>
<dbReference type="GO" id="GO:0008289">
    <property type="term" value="F:lipid binding"/>
    <property type="evidence" value="ECO:0000314"/>
    <property type="project" value="SGD"/>
</dbReference>
<dbReference type="GO" id="GO:0032934">
    <property type="term" value="F:sterol binding"/>
    <property type="evidence" value="ECO:0000318"/>
    <property type="project" value="GO_Central"/>
</dbReference>
<dbReference type="GO" id="GO:0120015">
    <property type="term" value="F:sterol transfer activity"/>
    <property type="evidence" value="ECO:0000314"/>
    <property type="project" value="SGD"/>
</dbReference>
<dbReference type="GO" id="GO:0006897">
    <property type="term" value="P:endocytosis"/>
    <property type="evidence" value="ECO:0000316"/>
    <property type="project" value="SGD"/>
</dbReference>
<dbReference type="GO" id="GO:0006887">
    <property type="term" value="P:exocytosis"/>
    <property type="evidence" value="ECO:0000316"/>
    <property type="project" value="SGD"/>
</dbReference>
<dbReference type="GO" id="GO:0030011">
    <property type="term" value="P:maintenance of cell polarity"/>
    <property type="evidence" value="ECO:0000316"/>
    <property type="project" value="SGD"/>
</dbReference>
<dbReference type="GO" id="GO:0034727">
    <property type="term" value="P:piecemeal microautophagy of the nucleus"/>
    <property type="evidence" value="ECO:0000316"/>
    <property type="project" value="SGD"/>
</dbReference>
<dbReference type="GO" id="GO:0015918">
    <property type="term" value="P:sterol transport"/>
    <property type="evidence" value="ECO:0000314"/>
    <property type="project" value="SGD"/>
</dbReference>
<dbReference type="CDD" id="cd13292">
    <property type="entry name" value="PH_Osh1p_Osh2p_yeast"/>
    <property type="match status" value="1"/>
</dbReference>
<dbReference type="FunFam" id="3.30.70.3490:FF:000010">
    <property type="entry name" value="Oxysterol binding protein (Osh1)"/>
    <property type="match status" value="1"/>
</dbReference>
<dbReference type="FunFam" id="2.30.29.30:FF:000061">
    <property type="entry name" value="Oxysterol binding protein 1"/>
    <property type="match status" value="1"/>
</dbReference>
<dbReference type="FunFam" id="1.25.40.20:FF:000308">
    <property type="entry name" value="Oxysterol-binding family protein"/>
    <property type="match status" value="1"/>
</dbReference>
<dbReference type="FunFam" id="2.40.160.120:FF:000001">
    <property type="entry name" value="Oxysterol-binding protein"/>
    <property type="match status" value="1"/>
</dbReference>
<dbReference type="FunFam" id="1.25.40.20:FF:000436">
    <property type="entry name" value="Swh1p"/>
    <property type="match status" value="1"/>
</dbReference>
<dbReference type="Gene3D" id="2.40.160.120">
    <property type="match status" value="1"/>
</dbReference>
<dbReference type="Gene3D" id="3.30.70.3490">
    <property type="match status" value="1"/>
</dbReference>
<dbReference type="Gene3D" id="1.25.40.20">
    <property type="entry name" value="Ankyrin repeat-containing domain"/>
    <property type="match status" value="2"/>
</dbReference>
<dbReference type="Gene3D" id="2.30.29.30">
    <property type="entry name" value="Pleckstrin-homology domain (PH domain)/Phosphotyrosine-binding domain (PTB)"/>
    <property type="match status" value="1"/>
</dbReference>
<dbReference type="InterPro" id="IPR002110">
    <property type="entry name" value="Ankyrin_rpt"/>
</dbReference>
<dbReference type="InterPro" id="IPR036770">
    <property type="entry name" value="Ankyrin_rpt-contain_sf"/>
</dbReference>
<dbReference type="InterPro" id="IPR037239">
    <property type="entry name" value="OSBP_sf"/>
</dbReference>
<dbReference type="InterPro" id="IPR000648">
    <property type="entry name" value="Oxysterol-bd"/>
</dbReference>
<dbReference type="InterPro" id="IPR018494">
    <property type="entry name" value="Oxysterol-bd_CS"/>
</dbReference>
<dbReference type="InterPro" id="IPR011993">
    <property type="entry name" value="PH-like_dom_sf"/>
</dbReference>
<dbReference type="InterPro" id="IPR001849">
    <property type="entry name" value="PH_domain"/>
</dbReference>
<dbReference type="PANTHER" id="PTHR10972:SF205">
    <property type="entry name" value="OXYSTEROL-BINDING PROTEIN 1"/>
    <property type="match status" value="1"/>
</dbReference>
<dbReference type="PANTHER" id="PTHR10972">
    <property type="entry name" value="OXYSTEROL-BINDING PROTEIN-RELATED"/>
    <property type="match status" value="1"/>
</dbReference>
<dbReference type="Pfam" id="PF00023">
    <property type="entry name" value="Ank"/>
    <property type="match status" value="1"/>
</dbReference>
<dbReference type="Pfam" id="PF13637">
    <property type="entry name" value="Ank_4"/>
    <property type="match status" value="1"/>
</dbReference>
<dbReference type="Pfam" id="PF01237">
    <property type="entry name" value="Oxysterol_BP"/>
    <property type="match status" value="1"/>
</dbReference>
<dbReference type="Pfam" id="PF00169">
    <property type="entry name" value="PH"/>
    <property type="match status" value="1"/>
</dbReference>
<dbReference type="SMART" id="SM00248">
    <property type="entry name" value="ANK"/>
    <property type="match status" value="2"/>
</dbReference>
<dbReference type="SMART" id="SM00233">
    <property type="entry name" value="PH"/>
    <property type="match status" value="1"/>
</dbReference>
<dbReference type="SUPFAM" id="SSF48403">
    <property type="entry name" value="Ankyrin repeat"/>
    <property type="match status" value="1"/>
</dbReference>
<dbReference type="SUPFAM" id="SSF144000">
    <property type="entry name" value="Oxysterol-binding protein-like"/>
    <property type="match status" value="1"/>
</dbReference>
<dbReference type="SUPFAM" id="SSF50729">
    <property type="entry name" value="PH domain-like"/>
    <property type="match status" value="1"/>
</dbReference>
<dbReference type="PROSITE" id="PS50297">
    <property type="entry name" value="ANK_REP_REGION"/>
    <property type="match status" value="2"/>
</dbReference>
<dbReference type="PROSITE" id="PS50088">
    <property type="entry name" value="ANK_REPEAT"/>
    <property type="match status" value="2"/>
</dbReference>
<dbReference type="PROSITE" id="PS01013">
    <property type="entry name" value="OSBP"/>
    <property type="match status" value="1"/>
</dbReference>
<dbReference type="PROSITE" id="PS50003">
    <property type="entry name" value="PH_DOMAIN"/>
    <property type="match status" value="1"/>
</dbReference>
<feature type="chain" id="PRO_0000100387" description="Oxysterol-binding protein homolog 1">
    <location>
        <begin position="1"/>
        <end position="1188"/>
    </location>
</feature>
<feature type="repeat" description="ANK 1" evidence="2">
    <location>
        <begin position="51"/>
        <end position="80"/>
    </location>
</feature>
<feature type="repeat" description="ANK 2" evidence="2">
    <location>
        <begin position="96"/>
        <end position="125"/>
    </location>
</feature>
<feature type="repeat" description="ANK 3" evidence="2">
    <location>
        <begin position="196"/>
        <end position="225"/>
    </location>
</feature>
<feature type="domain" description="PH" evidence="3">
    <location>
        <begin position="330"/>
        <end position="379"/>
    </location>
</feature>
<feature type="region of interest" description="Disordered" evidence="4">
    <location>
        <begin position="415"/>
        <end position="546"/>
    </location>
</feature>
<feature type="region of interest" description="Disordered" evidence="4">
    <location>
        <begin position="661"/>
        <end position="692"/>
    </location>
</feature>
<feature type="region of interest" description="Disordered" evidence="4">
    <location>
        <begin position="721"/>
        <end position="755"/>
    </location>
</feature>
<feature type="region of interest" description="OSBP-related domain (ORD)" evidence="16">
    <location>
        <begin position="800"/>
        <end position="1174"/>
    </location>
</feature>
<feature type="short sequence motif" description="FFAT">
    <location>
        <begin position="716"/>
        <end position="722"/>
    </location>
</feature>
<feature type="compositionally biased region" description="Polar residues" evidence="4">
    <location>
        <begin position="424"/>
        <end position="433"/>
    </location>
</feature>
<feature type="compositionally biased region" description="Low complexity" evidence="4">
    <location>
        <begin position="443"/>
        <end position="462"/>
    </location>
</feature>
<feature type="compositionally biased region" description="Acidic residues" evidence="4">
    <location>
        <begin position="463"/>
        <end position="473"/>
    </location>
</feature>
<feature type="compositionally biased region" description="Acidic residues" evidence="4">
    <location>
        <begin position="514"/>
        <end position="529"/>
    </location>
</feature>
<feature type="binding site" evidence="1">
    <location>
        <position position="834"/>
    </location>
    <ligand>
        <name>ergosterol</name>
        <dbReference type="ChEBI" id="CHEBI:16933"/>
    </ligand>
</feature>
<feature type="binding site" evidence="1">
    <location>
        <position position="962"/>
    </location>
    <ligand>
        <name>ergosterol</name>
        <dbReference type="ChEBI" id="CHEBI:16933"/>
    </ligand>
</feature>
<feature type="modified residue" description="Phosphoserine" evidence="21">
    <location>
        <position position="394"/>
    </location>
</feature>
<feature type="modified residue" description="Phosphoserine" evidence="21 22 23">
    <location>
        <position position="490"/>
    </location>
</feature>
<feature type="modified residue" description="Phosphoserine" evidence="22">
    <location>
        <position position="500"/>
    </location>
</feature>
<feature type="modified residue" description="Phosphoserine" evidence="21 22 23">
    <location>
        <position position="678"/>
    </location>
</feature>
<feature type="modified residue" description="Phosphoserine" evidence="23">
    <location>
        <position position="683"/>
    </location>
</feature>
<feature type="modified residue" description="Phosphoserine" evidence="23">
    <location>
        <position position="691"/>
    </location>
</feature>
<feature type="modified residue" description="Phosphothreonine" evidence="23">
    <location>
        <position position="692"/>
    </location>
</feature>
<feature type="modified residue" description="Phosphothreonine" evidence="22 23">
    <location>
        <position position="694"/>
    </location>
</feature>
<feature type="modified residue" description="Phosphoserine" evidence="21 22 23">
    <location>
        <position position="708"/>
    </location>
</feature>
<feature type="modified residue" description="Phosphoserine" evidence="21 22 23">
    <location>
        <position position="712"/>
    </location>
</feature>
<feature type="mutagenesis site" description="Abolishes function." evidence="7">
    <original>D</original>
    <variation>A</variation>
    <location>
        <position position="719"/>
    </location>
</feature>
<feature type="sequence conflict" description="In Ref. 1; CAA52646." evidence="16" ref="1">
    <original>D</original>
    <variation>Y</variation>
    <location>
        <position position="244"/>
    </location>
</feature>
<feature type="sequence conflict" description="In Ref. 3; AAC09496 and 4." evidence="16" ref="3 4">
    <original>N</original>
    <variation>S</variation>
    <location>
        <position position="248"/>
    </location>
</feature>
<feature type="sequence conflict" description="In Ref. 1; CAA52646." evidence="16" ref="1">
    <original>P</original>
    <variation>A</variation>
    <location>
        <position position="424"/>
    </location>
</feature>
<feature type="sequence conflict" description="In Ref. 1; CAA52646." evidence="16" ref="1">
    <original>D</original>
    <variation>NNN</variation>
    <location>
        <position position="464"/>
    </location>
</feature>
<feature type="sequence conflict" description="In Ref. 1; CAA52646." evidence="16" ref="1">
    <original>YD</original>
    <variation>DY</variation>
    <location>
        <begin position="468"/>
        <end position="469"/>
    </location>
</feature>
<feature type="sequence conflict" description="In Ref. 1; CAA52646." evidence="16" ref="1">
    <original>TP</original>
    <variation>AS</variation>
    <location>
        <begin position="495"/>
        <end position="496"/>
    </location>
</feature>
<feature type="helix" evidence="24">
    <location>
        <begin position="13"/>
        <end position="26"/>
    </location>
</feature>
<feature type="helix" evidence="24">
    <location>
        <begin position="29"/>
        <end position="39"/>
    </location>
</feature>
<feature type="helix" evidence="24">
    <location>
        <begin position="46"/>
        <end position="53"/>
    </location>
</feature>
<feature type="helix" evidence="24">
    <location>
        <begin position="55"/>
        <end position="62"/>
    </location>
</feature>
<feature type="helix" evidence="24">
    <location>
        <begin position="65"/>
        <end position="75"/>
    </location>
</feature>
<feature type="helix" evidence="24">
    <location>
        <begin position="100"/>
        <end position="106"/>
    </location>
</feature>
<feature type="helix" evidence="24">
    <location>
        <begin position="110"/>
        <end position="117"/>
    </location>
</feature>
<feature type="helix" evidence="24">
    <location>
        <begin position="134"/>
        <end position="137"/>
    </location>
</feature>
<feature type="helix" evidence="24">
    <location>
        <begin position="141"/>
        <end position="167"/>
    </location>
</feature>
<feature type="helix" evidence="24">
    <location>
        <begin position="171"/>
        <end position="178"/>
    </location>
</feature>
<feature type="helix" evidence="24">
    <location>
        <begin position="183"/>
        <end position="186"/>
    </location>
</feature>
<feature type="turn" evidence="24">
    <location>
        <begin position="194"/>
        <end position="196"/>
    </location>
</feature>
<feature type="helix" evidence="24">
    <location>
        <begin position="200"/>
        <end position="207"/>
    </location>
</feature>
<feature type="helix" evidence="24">
    <location>
        <begin position="210"/>
        <end position="218"/>
    </location>
</feature>
<feature type="helix" evidence="24">
    <location>
        <begin position="233"/>
        <end position="236"/>
    </location>
</feature>
<feature type="helix" evidence="24">
    <location>
        <begin position="249"/>
        <end position="251"/>
    </location>
</feature>
<feature type="helix" evidence="24">
    <location>
        <begin position="252"/>
        <end position="267"/>
    </location>
</feature>
<sequence>MEQPDLSSVAISKPLLKLKLLDALRQGSFPNLQDLLKKQFQPLDDPNVQQVLHLMLHYAVQVAPMAVIKEIVHHWVSTTNTTFLNIHLDLNERDSNGNTPLHIAAYQSRGDIVAFLLDQPTINDCVLNNSHLQAIEMCKNLNIAQMMQVKRSTYVAETAQEFRTAFNNRDFGHLESILSSPRNAELLDINGMDPETGDTVLHEFVKKRDVIMCRWLLEHGADPFKRDRKGKLPIELVRKVNENDTATNTKIAIDIELKKLLERATREQSVIDVTNNNLHEAPTYKGYLKKWTNFAQGYKLRWFILSSDGKLSYYIDQADTKNACRGSLNMSSCSLHLDSSEKLKFEIIGGNNGVIRWHLKGNHPIETNRWVWAIQGAIRYAKDREILLHNGPYSPSLALSHGLSSKVSNKENLHATSKRLTKSPHLSKSTLTQNDHDNDDDSTNNNNNKSNNDYDDNNNNNNNDDDDYDDDDESRPLIEPLPLISSRSQSLSEITPGPHSRKSTVSSTRAADIPSDDEGYSEDDSDDDGNSSYTMENGGENDGDEDLNAIYGPYIQKLHMLQRSISIELASLNELLQDKQQHDEYWNTVNTSIETVSEFFDKLNRLTSQREKRMIAQMTKQRDVNNVWIQSVKDLEMELVDKDEKLVALDKERKNLKKMLQKKLNNQPQVETEANEESDDANSMIKGSQESTNTLEEIVKFIEATKESDEDSDADEFFDAEEAASDKKANDSEDLTTNKETPANAKPQEEAPEDESLIVISSPQVEKKNQLLKEGSFVGYEDPVRTKLALDEDNRPKIGLWSVLKSMVGQDLTKLTLPVSFNEPTSLLQRVSEDIEYSHILDQAATFEDSSLRMLYVAAFTASMYASTTNRVSKPFNPLLGETFEYARTDGQYRFFTEQVSHHPPISATWTESPKWDFYGECNVDSSFNGRTFAVQHLGLWYITIRPDHNISVPEETYSWKKPNNTVIGILMGKPQVDNSGDVKVTNHTTGDYCMLHYKAHGWTSAGAYEVRGEVFNKDDKKLWVLGGHWNDSIYGKKVTARGGELTLDRIKTANSATGGPKLDGSKFLIWKANERPSVPFNLTSFALTLNALPPHLIPYLAPTDSRLRPDQRAMENGEYDKAAAEKHRVEVKQRAAKKEREQKGEEYRPKWFVQEEHPVTKSLYWKFNGEYWNKRKNHDFKDCADIF</sequence>
<organism>
    <name type="scientific">Saccharomyces cerevisiae (strain ATCC 204508 / S288c)</name>
    <name type="common">Baker's yeast</name>
    <dbReference type="NCBI Taxonomy" id="559292"/>
    <lineage>
        <taxon>Eukaryota</taxon>
        <taxon>Fungi</taxon>
        <taxon>Dikarya</taxon>
        <taxon>Ascomycota</taxon>
        <taxon>Saccharomycotina</taxon>
        <taxon>Saccharomycetes</taxon>
        <taxon>Saccharomycetales</taxon>
        <taxon>Saccharomycetaceae</taxon>
        <taxon>Saccharomyces</taxon>
    </lineage>
</organism>
<name>OSH1_YEAST</name>
<protein>
    <recommendedName>
        <fullName evidence="14">Oxysterol-binding protein homolog 1</fullName>
    </recommendedName>
    <alternativeName>
        <fullName>Oxysterol-binding protein-related protein 1</fullName>
        <shortName>ORP 1</shortName>
        <shortName>OSBP-related protein 1</shortName>
    </alternativeName>
</protein>
<gene>
    <name evidence="15" type="primary">SWH1</name>
    <name evidence="14" type="synonym">OSH1</name>
    <name type="ordered locus">YAR042W</name>
    <name type="ORF">YAR044W</name>
</gene>
<keyword id="KW-0002">3D-structure</keyword>
<keyword id="KW-0040">ANK repeat</keyword>
<keyword id="KW-0256">Endoplasmic reticulum</keyword>
<keyword id="KW-0333">Golgi apparatus</keyword>
<keyword id="KW-0445">Lipid transport</keyword>
<keyword id="KW-0446">Lipid-binding</keyword>
<keyword id="KW-0472">Membrane</keyword>
<keyword id="KW-0539">Nucleus</keyword>
<keyword id="KW-0597">Phosphoprotein</keyword>
<keyword id="KW-1185">Reference proteome</keyword>
<keyword id="KW-0677">Repeat</keyword>
<keyword id="KW-0813">Transport</keyword>
<keyword id="KW-0926">Vacuole</keyword>
<evidence type="ECO:0000250" key="1">
    <source>
        <dbReference type="UniProtKB" id="Q6CUK7"/>
    </source>
</evidence>
<evidence type="ECO:0000255" key="2"/>
<evidence type="ECO:0000255" key="3">
    <source>
        <dbReference type="PROSITE-ProRule" id="PRU00145"/>
    </source>
</evidence>
<evidence type="ECO:0000256" key="4">
    <source>
        <dbReference type="SAM" id="MobiDB-lite"/>
    </source>
</evidence>
<evidence type="ECO:0000269" key="5">
    <source>
    </source>
</evidence>
<evidence type="ECO:0000269" key="6">
    <source>
    </source>
</evidence>
<evidence type="ECO:0000269" key="7">
    <source>
    </source>
</evidence>
<evidence type="ECO:0000269" key="8">
    <source>
    </source>
</evidence>
<evidence type="ECO:0000269" key="9">
    <source>
    </source>
</evidence>
<evidence type="ECO:0000269" key="10">
    <source>
    </source>
</evidence>
<evidence type="ECO:0000269" key="11">
    <source>
    </source>
</evidence>
<evidence type="ECO:0000269" key="12">
    <source>
    </source>
</evidence>
<evidence type="ECO:0000269" key="13">
    <source>
    </source>
</evidence>
<evidence type="ECO:0000303" key="14">
    <source>
    </source>
</evidence>
<evidence type="ECO:0000303" key="15">
    <source>
    </source>
</evidence>
<evidence type="ECO:0000305" key="16"/>
<evidence type="ECO:0000305" key="17">
    <source>
    </source>
</evidence>
<evidence type="ECO:0000305" key="18">
    <source>
    </source>
</evidence>
<evidence type="ECO:0007744" key="19">
    <source>
        <dbReference type="PDB" id="5H28"/>
    </source>
</evidence>
<evidence type="ECO:0007744" key="20">
    <source>
        <dbReference type="PDB" id="5H2C"/>
    </source>
</evidence>
<evidence type="ECO:0007744" key="21">
    <source>
    </source>
</evidence>
<evidence type="ECO:0007744" key="22">
    <source>
    </source>
</evidence>
<evidence type="ECO:0007744" key="23">
    <source>
    </source>
</evidence>
<evidence type="ECO:0007829" key="24">
    <source>
        <dbReference type="PDB" id="5H28"/>
    </source>
</evidence>
<proteinExistence type="evidence at protein level"/>
<accession>P35845</accession>
<accession>D6VPN6</accession>
<accession>P39555</accession>
<accession>P80234</accession>
<accession>Q86ZC4</accession>
<accession>Q86ZS1</accession>